<keyword id="KW-0028">Amino-acid biosynthesis</keyword>
<keyword id="KW-0055">Arginine biosynthesis</keyword>
<keyword id="KW-0963">Cytoplasm</keyword>
<keyword id="KW-1185">Reference proteome</keyword>
<keyword id="KW-0808">Transferase</keyword>
<accession>Q3A1V3</accession>
<protein>
    <recommendedName>
        <fullName evidence="2">Ornithine carbamoyltransferase</fullName>
        <shortName evidence="2">OTCase</shortName>
        <ecNumber evidence="2">2.1.3.3</ecNumber>
    </recommendedName>
</protein>
<reference key="1">
    <citation type="submission" date="2005-10" db="EMBL/GenBank/DDBJ databases">
        <title>Complete sequence of Pelobacter carbinolicus DSM 2380.</title>
        <authorList>
            <person name="Copeland A."/>
            <person name="Lucas S."/>
            <person name="Lapidus A."/>
            <person name="Barry K."/>
            <person name="Detter J.C."/>
            <person name="Glavina T."/>
            <person name="Hammon N."/>
            <person name="Israni S."/>
            <person name="Pitluck S."/>
            <person name="Chertkov O."/>
            <person name="Schmutz J."/>
            <person name="Larimer F."/>
            <person name="Land M."/>
            <person name="Kyrpides N."/>
            <person name="Ivanova N."/>
            <person name="Richardson P."/>
        </authorList>
    </citation>
    <scope>NUCLEOTIDE SEQUENCE [LARGE SCALE GENOMIC DNA]</scope>
    <source>
        <strain>DSM 2380 / NBRC 103641 / GraBd1</strain>
    </source>
</reference>
<sequence length="302" mass="33561">MKKDFLCLTDWSLEELENLFTLAADLKAKQKAGEQHHLLKGKTLGMLFEKSSTRTRVSFEVGMYQLGGHALFLSSGSTQMGRGEPIKDTGRVMSRYVDGIMIRTFSQEGVEELAQWSTIPIINGLTDMYHPCQVMADLLTVIEHKKNYRDLTYCWIGDGNNMANSWINAAAMFGFELRVATPKGYEPHALVVERAKKLGARVTYLNDPLEAARGAHVLNTDVWASMGQEEEQAKRAAAFAGFQINAETIAAADPACILLHCLPAHRDEEITDEAIESSHAVVFDEAENRLHIQKAIMATLMA</sequence>
<evidence type="ECO:0000250" key="1"/>
<evidence type="ECO:0000255" key="2">
    <source>
        <dbReference type="HAMAP-Rule" id="MF_01109"/>
    </source>
</evidence>
<name>OTC_SYNC1</name>
<gene>
    <name evidence="2" type="primary">argF</name>
    <name type="ordered locus">Pcar_2415</name>
</gene>
<proteinExistence type="inferred from homology"/>
<organism>
    <name type="scientific">Syntrophotalea carbinolica (strain DSM 2380 / NBRC 103641 / GraBd1)</name>
    <name type="common">Pelobacter carbinolicus</name>
    <dbReference type="NCBI Taxonomy" id="338963"/>
    <lineage>
        <taxon>Bacteria</taxon>
        <taxon>Pseudomonadati</taxon>
        <taxon>Thermodesulfobacteriota</taxon>
        <taxon>Desulfuromonadia</taxon>
        <taxon>Desulfuromonadales</taxon>
        <taxon>Syntrophotaleaceae</taxon>
        <taxon>Syntrophotalea</taxon>
    </lineage>
</organism>
<feature type="chain" id="PRO_1000065109" description="Ornithine carbamoyltransferase">
    <location>
        <begin position="1"/>
        <end position="302"/>
    </location>
</feature>
<feature type="binding site" evidence="2">
    <location>
        <begin position="52"/>
        <end position="55"/>
    </location>
    <ligand>
        <name>carbamoyl phosphate</name>
        <dbReference type="ChEBI" id="CHEBI:58228"/>
    </ligand>
</feature>
<feature type="binding site" evidence="2">
    <location>
        <position position="79"/>
    </location>
    <ligand>
        <name>carbamoyl phosphate</name>
        <dbReference type="ChEBI" id="CHEBI:58228"/>
    </ligand>
</feature>
<feature type="binding site" evidence="2">
    <location>
        <position position="103"/>
    </location>
    <ligand>
        <name>carbamoyl phosphate</name>
        <dbReference type="ChEBI" id="CHEBI:58228"/>
    </ligand>
</feature>
<feature type="binding site" evidence="2">
    <location>
        <begin position="130"/>
        <end position="133"/>
    </location>
    <ligand>
        <name>carbamoyl phosphate</name>
        <dbReference type="ChEBI" id="CHEBI:58228"/>
    </ligand>
</feature>
<feature type="binding site" evidence="2">
    <location>
        <position position="161"/>
    </location>
    <ligand>
        <name>L-ornithine</name>
        <dbReference type="ChEBI" id="CHEBI:46911"/>
    </ligand>
</feature>
<feature type="binding site" evidence="2">
    <location>
        <position position="221"/>
    </location>
    <ligand>
        <name>L-ornithine</name>
        <dbReference type="ChEBI" id="CHEBI:46911"/>
    </ligand>
</feature>
<feature type="binding site" evidence="2">
    <location>
        <begin position="225"/>
        <end position="226"/>
    </location>
    <ligand>
        <name>L-ornithine</name>
        <dbReference type="ChEBI" id="CHEBI:46911"/>
    </ligand>
</feature>
<feature type="binding site" evidence="2">
    <location>
        <begin position="261"/>
        <end position="262"/>
    </location>
    <ligand>
        <name>carbamoyl phosphate</name>
        <dbReference type="ChEBI" id="CHEBI:58228"/>
    </ligand>
</feature>
<feature type="binding site" evidence="2">
    <location>
        <position position="289"/>
    </location>
    <ligand>
        <name>carbamoyl phosphate</name>
        <dbReference type="ChEBI" id="CHEBI:58228"/>
    </ligand>
</feature>
<comment type="function">
    <text evidence="1">Reversibly catalyzes the transfer of the carbamoyl group from carbamoyl phosphate (CP) to the N(epsilon) atom of ornithine (ORN) to produce L-citrulline.</text>
</comment>
<comment type="catalytic activity">
    <reaction evidence="2">
        <text>carbamoyl phosphate + L-ornithine = L-citrulline + phosphate + H(+)</text>
        <dbReference type="Rhea" id="RHEA:19513"/>
        <dbReference type="ChEBI" id="CHEBI:15378"/>
        <dbReference type="ChEBI" id="CHEBI:43474"/>
        <dbReference type="ChEBI" id="CHEBI:46911"/>
        <dbReference type="ChEBI" id="CHEBI:57743"/>
        <dbReference type="ChEBI" id="CHEBI:58228"/>
        <dbReference type="EC" id="2.1.3.3"/>
    </reaction>
</comment>
<comment type="pathway">
    <text evidence="2">Amino-acid biosynthesis; L-arginine biosynthesis; L-arginine from L-ornithine and carbamoyl phosphate: step 1/3.</text>
</comment>
<comment type="subcellular location">
    <subcellularLocation>
        <location evidence="2">Cytoplasm</location>
    </subcellularLocation>
</comment>
<comment type="similarity">
    <text evidence="2">Belongs to the aspartate/ornithine carbamoyltransferase superfamily. OTCase family.</text>
</comment>
<dbReference type="EC" id="2.1.3.3" evidence="2"/>
<dbReference type="EMBL" id="CP000142">
    <property type="protein sequence ID" value="ABA89654.1"/>
    <property type="molecule type" value="Genomic_DNA"/>
</dbReference>
<dbReference type="RefSeq" id="WP_011342180.1">
    <property type="nucleotide sequence ID" value="NC_007498.2"/>
</dbReference>
<dbReference type="SMR" id="Q3A1V3"/>
<dbReference type="STRING" id="338963.Pcar_2415"/>
<dbReference type="KEGG" id="pca:Pcar_2415"/>
<dbReference type="eggNOG" id="COG0078">
    <property type="taxonomic scope" value="Bacteria"/>
</dbReference>
<dbReference type="HOGENOM" id="CLU_043846_3_2_7"/>
<dbReference type="OrthoDB" id="9802587at2"/>
<dbReference type="UniPathway" id="UPA00068">
    <property type="reaction ID" value="UER00112"/>
</dbReference>
<dbReference type="Proteomes" id="UP000002534">
    <property type="component" value="Chromosome"/>
</dbReference>
<dbReference type="GO" id="GO:0005737">
    <property type="term" value="C:cytoplasm"/>
    <property type="evidence" value="ECO:0007669"/>
    <property type="project" value="UniProtKB-SubCell"/>
</dbReference>
<dbReference type="GO" id="GO:0016597">
    <property type="term" value="F:amino acid binding"/>
    <property type="evidence" value="ECO:0007669"/>
    <property type="project" value="InterPro"/>
</dbReference>
<dbReference type="GO" id="GO:0004585">
    <property type="term" value="F:ornithine carbamoyltransferase activity"/>
    <property type="evidence" value="ECO:0007669"/>
    <property type="project" value="UniProtKB-UniRule"/>
</dbReference>
<dbReference type="GO" id="GO:0042450">
    <property type="term" value="P:arginine biosynthetic process via ornithine"/>
    <property type="evidence" value="ECO:0007669"/>
    <property type="project" value="TreeGrafter"/>
</dbReference>
<dbReference type="GO" id="GO:0019240">
    <property type="term" value="P:citrulline biosynthetic process"/>
    <property type="evidence" value="ECO:0007669"/>
    <property type="project" value="TreeGrafter"/>
</dbReference>
<dbReference type="GO" id="GO:0006526">
    <property type="term" value="P:L-arginine biosynthetic process"/>
    <property type="evidence" value="ECO:0007669"/>
    <property type="project" value="UniProtKB-UniRule"/>
</dbReference>
<dbReference type="FunFam" id="3.40.50.1370:FF:000008">
    <property type="entry name" value="Ornithine carbamoyltransferase"/>
    <property type="match status" value="1"/>
</dbReference>
<dbReference type="FunFam" id="3.40.50.1370:FF:000016">
    <property type="entry name" value="Ornithine carbamoyltransferase"/>
    <property type="match status" value="1"/>
</dbReference>
<dbReference type="Gene3D" id="3.40.50.1370">
    <property type="entry name" value="Aspartate/ornithine carbamoyltransferase"/>
    <property type="match status" value="2"/>
</dbReference>
<dbReference type="HAMAP" id="MF_01109">
    <property type="entry name" value="OTCase"/>
    <property type="match status" value="1"/>
</dbReference>
<dbReference type="InterPro" id="IPR006132">
    <property type="entry name" value="Asp/Orn_carbamoyltranf_P-bd"/>
</dbReference>
<dbReference type="InterPro" id="IPR006130">
    <property type="entry name" value="Asp/Orn_carbamoylTrfase"/>
</dbReference>
<dbReference type="InterPro" id="IPR036901">
    <property type="entry name" value="Asp/Orn_carbamoylTrfase_sf"/>
</dbReference>
<dbReference type="InterPro" id="IPR006131">
    <property type="entry name" value="Asp_carbamoyltransf_Asp/Orn-bd"/>
</dbReference>
<dbReference type="InterPro" id="IPR002292">
    <property type="entry name" value="Orn/put_carbamltrans"/>
</dbReference>
<dbReference type="InterPro" id="IPR024904">
    <property type="entry name" value="OTCase_ArgI"/>
</dbReference>
<dbReference type="NCBIfam" id="TIGR00658">
    <property type="entry name" value="orni_carb_tr"/>
    <property type="match status" value="1"/>
</dbReference>
<dbReference type="NCBIfam" id="NF001986">
    <property type="entry name" value="PRK00779.1"/>
    <property type="match status" value="1"/>
</dbReference>
<dbReference type="PANTHER" id="PTHR45753">
    <property type="entry name" value="ORNITHINE CARBAMOYLTRANSFERASE, MITOCHONDRIAL"/>
    <property type="match status" value="1"/>
</dbReference>
<dbReference type="PANTHER" id="PTHR45753:SF3">
    <property type="entry name" value="ORNITHINE TRANSCARBAMYLASE, MITOCHONDRIAL"/>
    <property type="match status" value="1"/>
</dbReference>
<dbReference type="Pfam" id="PF00185">
    <property type="entry name" value="OTCace"/>
    <property type="match status" value="1"/>
</dbReference>
<dbReference type="Pfam" id="PF02729">
    <property type="entry name" value="OTCace_N"/>
    <property type="match status" value="1"/>
</dbReference>
<dbReference type="PRINTS" id="PR00100">
    <property type="entry name" value="AOTCASE"/>
</dbReference>
<dbReference type="PRINTS" id="PR00102">
    <property type="entry name" value="OTCASE"/>
</dbReference>
<dbReference type="SUPFAM" id="SSF53671">
    <property type="entry name" value="Aspartate/ornithine carbamoyltransferase"/>
    <property type="match status" value="1"/>
</dbReference>
<dbReference type="PROSITE" id="PS00097">
    <property type="entry name" value="CARBAMOYLTRANSFERASE"/>
    <property type="match status" value="1"/>
</dbReference>